<sequence>MSINDKPIGFFDSGVGGISVLKEAFKLLPKEDFLYYGDSKNAPYGTKKVEEVKALTFNATDFLMNKGIKALVVACNTATSVTINDLRENYDIPIIGIEPALKPAVELNKGGKIIIMATPMTLAEKKFANLMDLYKETEDIEPLPCPGLPELIEQGIVSGDVIYNYLKDKFSKYDNEKISSIVLGCTHYPFIEETLKEVTHNKACIIDGSFGTSRELKRQLKNSNMLREENRVGKVTIFNSREDKDIIDLSYKLFNMK</sequence>
<accession>A7GJF6</accession>
<dbReference type="EC" id="5.1.1.3" evidence="1"/>
<dbReference type="EMBL" id="CP000728">
    <property type="protein sequence ID" value="ABS39373.1"/>
    <property type="molecule type" value="Genomic_DNA"/>
</dbReference>
<dbReference type="RefSeq" id="WP_012101176.1">
    <property type="nucleotide sequence ID" value="NC_009699.1"/>
</dbReference>
<dbReference type="SMR" id="A7GJF6"/>
<dbReference type="KEGG" id="cbf:CLI_3784"/>
<dbReference type="HOGENOM" id="CLU_052344_1_0_9"/>
<dbReference type="UniPathway" id="UPA00219"/>
<dbReference type="Proteomes" id="UP000002410">
    <property type="component" value="Chromosome"/>
</dbReference>
<dbReference type="GO" id="GO:0008881">
    <property type="term" value="F:glutamate racemase activity"/>
    <property type="evidence" value="ECO:0007669"/>
    <property type="project" value="UniProtKB-UniRule"/>
</dbReference>
<dbReference type="GO" id="GO:0071555">
    <property type="term" value="P:cell wall organization"/>
    <property type="evidence" value="ECO:0007669"/>
    <property type="project" value="UniProtKB-KW"/>
</dbReference>
<dbReference type="GO" id="GO:0009252">
    <property type="term" value="P:peptidoglycan biosynthetic process"/>
    <property type="evidence" value="ECO:0007669"/>
    <property type="project" value="UniProtKB-UniRule"/>
</dbReference>
<dbReference type="GO" id="GO:0008360">
    <property type="term" value="P:regulation of cell shape"/>
    <property type="evidence" value="ECO:0007669"/>
    <property type="project" value="UniProtKB-KW"/>
</dbReference>
<dbReference type="FunFam" id="3.40.50.1860:FF:000002">
    <property type="entry name" value="Glutamate racemase"/>
    <property type="match status" value="1"/>
</dbReference>
<dbReference type="Gene3D" id="3.40.50.1860">
    <property type="match status" value="2"/>
</dbReference>
<dbReference type="HAMAP" id="MF_00258">
    <property type="entry name" value="Glu_racemase"/>
    <property type="match status" value="1"/>
</dbReference>
<dbReference type="InterPro" id="IPR015942">
    <property type="entry name" value="Asp/Glu/hydantoin_racemase"/>
</dbReference>
<dbReference type="InterPro" id="IPR001920">
    <property type="entry name" value="Asp/Glu_race"/>
</dbReference>
<dbReference type="InterPro" id="IPR018187">
    <property type="entry name" value="Asp/Glu_racemase_AS_1"/>
</dbReference>
<dbReference type="InterPro" id="IPR033134">
    <property type="entry name" value="Asp/Glu_racemase_AS_2"/>
</dbReference>
<dbReference type="InterPro" id="IPR004391">
    <property type="entry name" value="Glu_race"/>
</dbReference>
<dbReference type="NCBIfam" id="TIGR00067">
    <property type="entry name" value="glut_race"/>
    <property type="match status" value="1"/>
</dbReference>
<dbReference type="PANTHER" id="PTHR21198">
    <property type="entry name" value="GLUTAMATE RACEMASE"/>
    <property type="match status" value="1"/>
</dbReference>
<dbReference type="PANTHER" id="PTHR21198:SF3">
    <property type="entry name" value="GLUTAMATE RACEMASE"/>
    <property type="match status" value="1"/>
</dbReference>
<dbReference type="Pfam" id="PF01177">
    <property type="entry name" value="Asp_Glu_race"/>
    <property type="match status" value="1"/>
</dbReference>
<dbReference type="SUPFAM" id="SSF53681">
    <property type="entry name" value="Aspartate/glutamate racemase"/>
    <property type="match status" value="2"/>
</dbReference>
<dbReference type="PROSITE" id="PS00923">
    <property type="entry name" value="ASP_GLU_RACEMASE_1"/>
    <property type="match status" value="1"/>
</dbReference>
<dbReference type="PROSITE" id="PS00924">
    <property type="entry name" value="ASP_GLU_RACEMASE_2"/>
    <property type="match status" value="1"/>
</dbReference>
<protein>
    <recommendedName>
        <fullName evidence="1">Glutamate racemase</fullName>
        <ecNumber evidence="1">5.1.1.3</ecNumber>
    </recommendedName>
</protein>
<reference key="1">
    <citation type="submission" date="2007-06" db="EMBL/GenBank/DDBJ databases">
        <authorList>
            <person name="Brinkac L.M."/>
            <person name="Daugherty S."/>
            <person name="Dodson R.J."/>
            <person name="Madupu R."/>
            <person name="Brown J.L."/>
            <person name="Bruce D."/>
            <person name="Detter C."/>
            <person name="Munk C."/>
            <person name="Smith L.A."/>
            <person name="Smith T.J."/>
            <person name="White O."/>
            <person name="Brettin T.S."/>
        </authorList>
    </citation>
    <scope>NUCLEOTIDE SEQUENCE [LARGE SCALE GENOMIC DNA]</scope>
    <source>
        <strain>Langeland / NCTC 10281 / Type F</strain>
    </source>
</reference>
<evidence type="ECO:0000255" key="1">
    <source>
        <dbReference type="HAMAP-Rule" id="MF_00258"/>
    </source>
</evidence>
<keyword id="KW-0133">Cell shape</keyword>
<keyword id="KW-0961">Cell wall biogenesis/degradation</keyword>
<keyword id="KW-0413">Isomerase</keyword>
<keyword id="KW-0573">Peptidoglycan synthesis</keyword>
<gene>
    <name evidence="1" type="primary">murI</name>
    <name type="ordered locus">CLI_3784</name>
</gene>
<comment type="function">
    <text evidence="1">Provides the (R)-glutamate required for cell wall biosynthesis.</text>
</comment>
<comment type="catalytic activity">
    <reaction evidence="1">
        <text>L-glutamate = D-glutamate</text>
        <dbReference type="Rhea" id="RHEA:12813"/>
        <dbReference type="ChEBI" id="CHEBI:29985"/>
        <dbReference type="ChEBI" id="CHEBI:29986"/>
        <dbReference type="EC" id="5.1.1.3"/>
    </reaction>
</comment>
<comment type="pathway">
    <text evidence="1">Cell wall biogenesis; peptidoglycan biosynthesis.</text>
</comment>
<comment type="similarity">
    <text evidence="1">Belongs to the aspartate/glutamate racemases family.</text>
</comment>
<organism>
    <name type="scientific">Clostridium botulinum (strain Langeland / NCTC 10281 / Type F)</name>
    <dbReference type="NCBI Taxonomy" id="441772"/>
    <lineage>
        <taxon>Bacteria</taxon>
        <taxon>Bacillati</taxon>
        <taxon>Bacillota</taxon>
        <taxon>Clostridia</taxon>
        <taxon>Eubacteriales</taxon>
        <taxon>Clostridiaceae</taxon>
        <taxon>Clostridium</taxon>
    </lineage>
</organism>
<name>MURI_CLOBL</name>
<feature type="chain" id="PRO_1000047558" description="Glutamate racemase">
    <location>
        <begin position="1"/>
        <end position="257"/>
    </location>
</feature>
<feature type="active site" description="Proton donor/acceptor" evidence="1">
    <location>
        <position position="75"/>
    </location>
</feature>
<feature type="active site" description="Proton donor/acceptor" evidence="1">
    <location>
        <position position="185"/>
    </location>
</feature>
<feature type="binding site" evidence="1">
    <location>
        <begin position="12"/>
        <end position="13"/>
    </location>
    <ligand>
        <name>substrate</name>
    </ligand>
</feature>
<feature type="binding site" evidence="1">
    <location>
        <begin position="44"/>
        <end position="45"/>
    </location>
    <ligand>
        <name>substrate</name>
    </ligand>
</feature>
<feature type="binding site" evidence="1">
    <location>
        <begin position="76"/>
        <end position="77"/>
    </location>
    <ligand>
        <name>substrate</name>
    </ligand>
</feature>
<feature type="binding site" evidence="1">
    <location>
        <begin position="186"/>
        <end position="187"/>
    </location>
    <ligand>
        <name>substrate</name>
    </ligand>
</feature>
<proteinExistence type="inferred from homology"/>